<comment type="function">
    <text evidence="1">Molecular chaperone. Has ATPase activity.</text>
</comment>
<comment type="subunit">
    <text evidence="1">Homodimer.</text>
</comment>
<comment type="subcellular location">
    <subcellularLocation>
        <location evidence="1">Cytoplasm</location>
    </subcellularLocation>
</comment>
<comment type="similarity">
    <text evidence="1">Belongs to the heat shock protein 90 family.</text>
</comment>
<organism>
    <name type="scientific">Porphyromonas gingivalis (strain ATCC BAA-308 / W83)</name>
    <dbReference type="NCBI Taxonomy" id="242619"/>
    <lineage>
        <taxon>Bacteria</taxon>
        <taxon>Pseudomonadati</taxon>
        <taxon>Bacteroidota</taxon>
        <taxon>Bacteroidia</taxon>
        <taxon>Bacteroidales</taxon>
        <taxon>Porphyromonadaceae</taxon>
        <taxon>Porphyromonas</taxon>
    </lineage>
</organism>
<keyword id="KW-0067">ATP-binding</keyword>
<keyword id="KW-0143">Chaperone</keyword>
<keyword id="KW-0963">Cytoplasm</keyword>
<keyword id="KW-0547">Nucleotide-binding</keyword>
<keyword id="KW-1185">Reference proteome</keyword>
<keyword id="KW-0346">Stress response</keyword>
<accession>P0C938</accession>
<accession>Q9S3Q2</accession>
<proteinExistence type="inferred from homology"/>
<sequence>MSKKGTIGVTSDNIFPVIKKFLYSDHEIFLREIVSNAVDATQKLKTLTSVGEFKGETGDLRVTVSVDEVARTITVSDRGVGMTEEEVEKYINQIAFSSAEEFLEKYKDDKAAIIGHFGLGFYSAFMVSERVDVITRSFREDATAVKWSCDGSPEYTLEPADKADRGTDIVMHIDEENSEFLKKEKIEGLLGKYCKFLTVPIIFGKKQEWKDGKMQDTDEDNQINDTHPAWTKKPADLKDEDYKEFYRSLYPMSEEPLFWIHLNVDYPFNLTGILYFPKIKNNLDLQRNKIQLYCNQVYVTDEVQGIVPDFLTLLHGVIDSPDIPLNVSRSYLQSDANVKKISSHITKKVADRLEEIFKNDRPTFEEKWDSLKLFVEYGMLTDEKFYERAAKFFLFTDMDGHKYTFDEYRTLVEGVQTDKDGQVVYLYATDKHGQYSHVKRASDKGYSVMLLDGQLDPHIVSLLEQKLEKTHFVRVDSDTINNLIRKEERAEVKLSDTERATLVKLFEARLPRDEKKHFNVAFESLGAEGEAILITQAEFMRRMRDMAQLQPGMSFYGELPDSYNLVLNTDHPLIDRVLSGEKESVEPSLTELRAKIAELKAEEAKLLDEEKGKKPEEIPVATKEAKENNAVEQAKTEGSINDQLTKYAQDNELIGQLIDLALLGSGLLTGEALAEFIRRSQRLL</sequence>
<dbReference type="EMBL" id="AE015924">
    <property type="protein sequence ID" value="AAQ65296.1"/>
    <property type="molecule type" value="Genomic_DNA"/>
</dbReference>
<dbReference type="RefSeq" id="WP_005873540.1">
    <property type="nucleotide sequence ID" value="NC_002950.2"/>
</dbReference>
<dbReference type="SMR" id="P0C938"/>
<dbReference type="STRING" id="242619.PG_0045"/>
<dbReference type="EnsemblBacteria" id="AAQ65296">
    <property type="protein sequence ID" value="AAQ65296"/>
    <property type="gene ID" value="PG_0045"/>
</dbReference>
<dbReference type="KEGG" id="pgi:PG_0045"/>
<dbReference type="PATRIC" id="fig|242619.8.peg.41"/>
<dbReference type="eggNOG" id="COG0326">
    <property type="taxonomic scope" value="Bacteria"/>
</dbReference>
<dbReference type="HOGENOM" id="CLU_006684_3_2_10"/>
<dbReference type="BioCyc" id="PGIN242619:G1G02-41-MONOMER"/>
<dbReference type="Proteomes" id="UP000000588">
    <property type="component" value="Chromosome"/>
</dbReference>
<dbReference type="GO" id="GO:0005737">
    <property type="term" value="C:cytoplasm"/>
    <property type="evidence" value="ECO:0007669"/>
    <property type="project" value="UniProtKB-SubCell"/>
</dbReference>
<dbReference type="GO" id="GO:0005524">
    <property type="term" value="F:ATP binding"/>
    <property type="evidence" value="ECO:0007669"/>
    <property type="project" value="UniProtKB-UniRule"/>
</dbReference>
<dbReference type="GO" id="GO:0016887">
    <property type="term" value="F:ATP hydrolysis activity"/>
    <property type="evidence" value="ECO:0007669"/>
    <property type="project" value="InterPro"/>
</dbReference>
<dbReference type="GO" id="GO:0140662">
    <property type="term" value="F:ATP-dependent protein folding chaperone"/>
    <property type="evidence" value="ECO:0007669"/>
    <property type="project" value="InterPro"/>
</dbReference>
<dbReference type="GO" id="GO:0051082">
    <property type="term" value="F:unfolded protein binding"/>
    <property type="evidence" value="ECO:0007669"/>
    <property type="project" value="UniProtKB-UniRule"/>
</dbReference>
<dbReference type="CDD" id="cd16927">
    <property type="entry name" value="HATPase_Hsp90-like"/>
    <property type="match status" value="1"/>
</dbReference>
<dbReference type="FunFam" id="3.30.230.80:FF:000008">
    <property type="entry name" value="Molecular chaperone HtpG"/>
    <property type="match status" value="1"/>
</dbReference>
<dbReference type="FunFam" id="3.30.565.10:FF:000076">
    <property type="entry name" value="Molecular chaperone HtpG"/>
    <property type="match status" value="1"/>
</dbReference>
<dbReference type="Gene3D" id="3.30.230.80">
    <property type="match status" value="1"/>
</dbReference>
<dbReference type="Gene3D" id="3.40.50.11260">
    <property type="match status" value="1"/>
</dbReference>
<dbReference type="Gene3D" id="3.30.565.10">
    <property type="entry name" value="Histidine kinase-like ATPase, C-terminal domain"/>
    <property type="match status" value="1"/>
</dbReference>
<dbReference type="HAMAP" id="MF_00505">
    <property type="entry name" value="HSP90"/>
    <property type="match status" value="1"/>
</dbReference>
<dbReference type="InterPro" id="IPR036890">
    <property type="entry name" value="HATPase_C_sf"/>
</dbReference>
<dbReference type="InterPro" id="IPR019805">
    <property type="entry name" value="Heat_shock_protein_90_CS"/>
</dbReference>
<dbReference type="InterPro" id="IPR001404">
    <property type="entry name" value="Hsp90_fam"/>
</dbReference>
<dbReference type="InterPro" id="IPR020575">
    <property type="entry name" value="Hsp90_N"/>
</dbReference>
<dbReference type="InterPro" id="IPR020568">
    <property type="entry name" value="Ribosomal_Su5_D2-typ_SF"/>
</dbReference>
<dbReference type="NCBIfam" id="NF003555">
    <property type="entry name" value="PRK05218.1"/>
    <property type="match status" value="1"/>
</dbReference>
<dbReference type="PANTHER" id="PTHR11528">
    <property type="entry name" value="HEAT SHOCK PROTEIN 90 FAMILY MEMBER"/>
    <property type="match status" value="1"/>
</dbReference>
<dbReference type="Pfam" id="PF13589">
    <property type="entry name" value="HATPase_c_3"/>
    <property type="match status" value="1"/>
</dbReference>
<dbReference type="Pfam" id="PF00183">
    <property type="entry name" value="HSP90"/>
    <property type="match status" value="1"/>
</dbReference>
<dbReference type="PIRSF" id="PIRSF002583">
    <property type="entry name" value="Hsp90"/>
    <property type="match status" value="1"/>
</dbReference>
<dbReference type="PRINTS" id="PR00775">
    <property type="entry name" value="HEATSHOCK90"/>
</dbReference>
<dbReference type="SMART" id="SM00387">
    <property type="entry name" value="HATPase_c"/>
    <property type="match status" value="1"/>
</dbReference>
<dbReference type="SUPFAM" id="SSF55874">
    <property type="entry name" value="ATPase domain of HSP90 chaperone/DNA topoisomerase II/histidine kinase"/>
    <property type="match status" value="1"/>
</dbReference>
<dbReference type="SUPFAM" id="SSF54211">
    <property type="entry name" value="Ribosomal protein S5 domain 2-like"/>
    <property type="match status" value="1"/>
</dbReference>
<dbReference type="PROSITE" id="PS00298">
    <property type="entry name" value="HSP90"/>
    <property type="match status" value="1"/>
</dbReference>
<gene>
    <name evidence="1" type="primary">htpG</name>
    <name type="ordered locus">PG_0045</name>
</gene>
<name>HTPG_PORGI</name>
<protein>
    <recommendedName>
        <fullName evidence="1">Chaperone protein HtpG</fullName>
    </recommendedName>
    <alternativeName>
        <fullName evidence="1">Heat shock protein HtpG</fullName>
    </alternativeName>
    <alternativeName>
        <fullName evidence="1">High temperature protein G</fullName>
    </alternativeName>
</protein>
<evidence type="ECO:0000255" key="1">
    <source>
        <dbReference type="HAMAP-Rule" id="MF_00505"/>
    </source>
</evidence>
<feature type="chain" id="PRO_0000063002" description="Chaperone protein HtpG">
    <location>
        <begin position="1"/>
        <end position="684"/>
    </location>
</feature>
<feature type="region of interest" description="A; substrate-binding" evidence="1">
    <location>
        <begin position="1"/>
        <end position="329"/>
    </location>
</feature>
<feature type="region of interest" description="B" evidence="1">
    <location>
        <begin position="330"/>
        <end position="548"/>
    </location>
</feature>
<feature type="region of interest" description="C" evidence="1">
    <location>
        <begin position="549"/>
        <end position="684"/>
    </location>
</feature>
<reference key="1">
    <citation type="journal article" date="2003" name="J. Bacteriol.">
        <title>Complete genome sequence of the oral pathogenic bacterium Porphyromonas gingivalis strain W83.</title>
        <authorList>
            <person name="Nelson K.E."/>
            <person name="Fleischmann R.D."/>
            <person name="DeBoy R.T."/>
            <person name="Paulsen I.T."/>
            <person name="Fouts D.E."/>
            <person name="Eisen J.A."/>
            <person name="Daugherty S.C."/>
            <person name="Dodson R.J."/>
            <person name="Durkin A.S."/>
            <person name="Gwinn M.L."/>
            <person name="Haft D.H."/>
            <person name="Kolonay J.F."/>
            <person name="Nelson W.C."/>
            <person name="Mason T.M."/>
            <person name="Tallon L."/>
            <person name="Gray J."/>
            <person name="Granger D."/>
            <person name="Tettelin H."/>
            <person name="Dong H."/>
            <person name="Galvin J.L."/>
            <person name="Duncan M.J."/>
            <person name="Dewhirst F.E."/>
            <person name="Fraser C.M."/>
        </authorList>
    </citation>
    <scope>NUCLEOTIDE SEQUENCE [LARGE SCALE GENOMIC DNA]</scope>
    <source>
        <strain>ATCC BAA-308 / W83</strain>
    </source>
</reference>